<keyword id="KW-0067">ATP-binding</keyword>
<keyword id="KW-0173">Coenzyme A biosynthesis</keyword>
<keyword id="KW-0963">Cytoplasm</keyword>
<keyword id="KW-0460">Magnesium</keyword>
<keyword id="KW-0547">Nucleotide-binding</keyword>
<keyword id="KW-0548">Nucleotidyltransferase</keyword>
<keyword id="KW-0808">Transferase</keyword>
<organism>
    <name type="scientific">Exiguobacterium sp. (strain ATCC BAA-1283 / AT1b)</name>
    <dbReference type="NCBI Taxonomy" id="360911"/>
    <lineage>
        <taxon>Bacteria</taxon>
        <taxon>Bacillati</taxon>
        <taxon>Bacillota</taxon>
        <taxon>Bacilli</taxon>
        <taxon>Bacillales</taxon>
        <taxon>Bacillales Family XII. Incertae Sedis</taxon>
        <taxon>Exiguobacterium</taxon>
    </lineage>
</organism>
<proteinExistence type="inferred from homology"/>
<accession>C4L5T1</accession>
<reference key="1">
    <citation type="journal article" date="2011" name="J. Bacteriol.">
        <title>Complete genome sequence of the Thermophilic Bacterium Exiguobacterium sp. AT1b.</title>
        <authorList>
            <person name="Vishnivetskaya T.A."/>
            <person name="Lucas S."/>
            <person name="Copeland A."/>
            <person name="Lapidus A."/>
            <person name="Glavina del Rio T."/>
            <person name="Dalin E."/>
            <person name="Tice H."/>
            <person name="Bruce D.C."/>
            <person name="Goodwin L.A."/>
            <person name="Pitluck S."/>
            <person name="Saunders E."/>
            <person name="Brettin T."/>
            <person name="Detter C."/>
            <person name="Han C."/>
            <person name="Larimer F."/>
            <person name="Land M.L."/>
            <person name="Hauser L.J."/>
            <person name="Kyrpides N.C."/>
            <person name="Ovchinnikova G."/>
            <person name="Kathariou S."/>
            <person name="Ramaley R.F."/>
            <person name="Rodrigues D.F."/>
            <person name="Hendrix C."/>
            <person name="Richardson P."/>
            <person name="Tiedje J.M."/>
        </authorList>
    </citation>
    <scope>NUCLEOTIDE SEQUENCE [LARGE SCALE GENOMIC DNA]</scope>
    <source>
        <strain>ATCC BAA-1283 / AT1b</strain>
    </source>
</reference>
<gene>
    <name evidence="1" type="primary">coaD</name>
    <name type="ordered locus">EAT1b_2823</name>
</gene>
<evidence type="ECO:0000255" key="1">
    <source>
        <dbReference type="HAMAP-Rule" id="MF_00151"/>
    </source>
</evidence>
<protein>
    <recommendedName>
        <fullName evidence="1">Phosphopantetheine adenylyltransferase</fullName>
        <ecNumber evidence="1">2.7.7.3</ecNumber>
    </recommendedName>
    <alternativeName>
        <fullName evidence="1">Dephospho-CoA pyrophosphorylase</fullName>
    </alternativeName>
    <alternativeName>
        <fullName evidence="1">Pantetheine-phosphate adenylyltransferase</fullName>
        <shortName evidence="1">PPAT</shortName>
    </alternativeName>
</protein>
<sequence length="164" mass="18039">MKRIAICPGSFDPITNGHLDIIERAAAIFDEVIVAVLENSSKAPLFDVEERLGLIRDVTTHLPNVSADAFGGLLVEYAAEREAATIVRGLRAVSDFEYELQIASINKKLNENVETLFMMTNSQYSFLSSSIVKEVAKYGASVSELVPEQVEIALRKKYQVSSGQ</sequence>
<name>COAD_EXISA</name>
<comment type="function">
    <text evidence="1">Reversibly transfers an adenylyl group from ATP to 4'-phosphopantetheine, yielding dephospho-CoA (dPCoA) and pyrophosphate.</text>
</comment>
<comment type="catalytic activity">
    <reaction evidence="1">
        <text>(R)-4'-phosphopantetheine + ATP + H(+) = 3'-dephospho-CoA + diphosphate</text>
        <dbReference type="Rhea" id="RHEA:19801"/>
        <dbReference type="ChEBI" id="CHEBI:15378"/>
        <dbReference type="ChEBI" id="CHEBI:30616"/>
        <dbReference type="ChEBI" id="CHEBI:33019"/>
        <dbReference type="ChEBI" id="CHEBI:57328"/>
        <dbReference type="ChEBI" id="CHEBI:61723"/>
        <dbReference type="EC" id="2.7.7.3"/>
    </reaction>
</comment>
<comment type="cofactor">
    <cofactor evidence="1">
        <name>Mg(2+)</name>
        <dbReference type="ChEBI" id="CHEBI:18420"/>
    </cofactor>
</comment>
<comment type="pathway">
    <text evidence="1">Cofactor biosynthesis; coenzyme A biosynthesis; CoA from (R)-pantothenate: step 4/5.</text>
</comment>
<comment type="subunit">
    <text evidence="1">Homohexamer.</text>
</comment>
<comment type="subcellular location">
    <subcellularLocation>
        <location evidence="1">Cytoplasm</location>
    </subcellularLocation>
</comment>
<comment type="similarity">
    <text evidence="1">Belongs to the bacterial CoaD family.</text>
</comment>
<dbReference type="EC" id="2.7.7.3" evidence="1"/>
<dbReference type="EMBL" id="CP001615">
    <property type="protein sequence ID" value="ACQ71737.1"/>
    <property type="molecule type" value="Genomic_DNA"/>
</dbReference>
<dbReference type="RefSeq" id="WP_015881296.1">
    <property type="nucleotide sequence ID" value="NC_012673.1"/>
</dbReference>
<dbReference type="SMR" id="C4L5T1"/>
<dbReference type="STRING" id="360911.EAT1b_2823"/>
<dbReference type="GeneID" id="94372514"/>
<dbReference type="KEGG" id="eat:EAT1b_2823"/>
<dbReference type="eggNOG" id="COG0669">
    <property type="taxonomic scope" value="Bacteria"/>
</dbReference>
<dbReference type="HOGENOM" id="CLU_100149_0_1_9"/>
<dbReference type="OrthoDB" id="9806661at2"/>
<dbReference type="UniPathway" id="UPA00241">
    <property type="reaction ID" value="UER00355"/>
</dbReference>
<dbReference type="Proteomes" id="UP000000716">
    <property type="component" value="Chromosome"/>
</dbReference>
<dbReference type="GO" id="GO:0005737">
    <property type="term" value="C:cytoplasm"/>
    <property type="evidence" value="ECO:0007669"/>
    <property type="project" value="UniProtKB-SubCell"/>
</dbReference>
<dbReference type="GO" id="GO:0005524">
    <property type="term" value="F:ATP binding"/>
    <property type="evidence" value="ECO:0007669"/>
    <property type="project" value="UniProtKB-KW"/>
</dbReference>
<dbReference type="GO" id="GO:0004595">
    <property type="term" value="F:pantetheine-phosphate adenylyltransferase activity"/>
    <property type="evidence" value="ECO:0007669"/>
    <property type="project" value="UniProtKB-UniRule"/>
</dbReference>
<dbReference type="GO" id="GO:0015937">
    <property type="term" value="P:coenzyme A biosynthetic process"/>
    <property type="evidence" value="ECO:0007669"/>
    <property type="project" value="UniProtKB-UniRule"/>
</dbReference>
<dbReference type="CDD" id="cd02163">
    <property type="entry name" value="PPAT"/>
    <property type="match status" value="1"/>
</dbReference>
<dbReference type="FunFam" id="3.40.50.620:FF:000012">
    <property type="entry name" value="Phosphopantetheine adenylyltransferase"/>
    <property type="match status" value="1"/>
</dbReference>
<dbReference type="Gene3D" id="3.40.50.620">
    <property type="entry name" value="HUPs"/>
    <property type="match status" value="1"/>
</dbReference>
<dbReference type="HAMAP" id="MF_00151">
    <property type="entry name" value="PPAT_bact"/>
    <property type="match status" value="1"/>
</dbReference>
<dbReference type="InterPro" id="IPR004821">
    <property type="entry name" value="Cyt_trans-like"/>
</dbReference>
<dbReference type="InterPro" id="IPR001980">
    <property type="entry name" value="PPAT"/>
</dbReference>
<dbReference type="InterPro" id="IPR014729">
    <property type="entry name" value="Rossmann-like_a/b/a_fold"/>
</dbReference>
<dbReference type="NCBIfam" id="TIGR01510">
    <property type="entry name" value="coaD_prev_kdtB"/>
    <property type="match status" value="1"/>
</dbReference>
<dbReference type="NCBIfam" id="TIGR00125">
    <property type="entry name" value="cyt_tran_rel"/>
    <property type="match status" value="1"/>
</dbReference>
<dbReference type="PANTHER" id="PTHR21342">
    <property type="entry name" value="PHOSPHOPANTETHEINE ADENYLYLTRANSFERASE"/>
    <property type="match status" value="1"/>
</dbReference>
<dbReference type="PANTHER" id="PTHR21342:SF1">
    <property type="entry name" value="PHOSPHOPANTETHEINE ADENYLYLTRANSFERASE"/>
    <property type="match status" value="1"/>
</dbReference>
<dbReference type="Pfam" id="PF01467">
    <property type="entry name" value="CTP_transf_like"/>
    <property type="match status" value="1"/>
</dbReference>
<dbReference type="PRINTS" id="PR01020">
    <property type="entry name" value="LPSBIOSNTHSS"/>
</dbReference>
<dbReference type="SUPFAM" id="SSF52374">
    <property type="entry name" value="Nucleotidylyl transferase"/>
    <property type="match status" value="1"/>
</dbReference>
<feature type="chain" id="PRO_1000203422" description="Phosphopantetheine adenylyltransferase">
    <location>
        <begin position="1"/>
        <end position="164"/>
    </location>
</feature>
<feature type="binding site" evidence="1">
    <location>
        <begin position="10"/>
        <end position="11"/>
    </location>
    <ligand>
        <name>ATP</name>
        <dbReference type="ChEBI" id="CHEBI:30616"/>
    </ligand>
</feature>
<feature type="binding site" evidence="1">
    <location>
        <position position="10"/>
    </location>
    <ligand>
        <name>substrate</name>
    </ligand>
</feature>
<feature type="binding site" evidence="1">
    <location>
        <position position="18"/>
    </location>
    <ligand>
        <name>ATP</name>
        <dbReference type="ChEBI" id="CHEBI:30616"/>
    </ligand>
</feature>
<feature type="binding site" evidence="1">
    <location>
        <position position="42"/>
    </location>
    <ligand>
        <name>substrate</name>
    </ligand>
</feature>
<feature type="binding site" evidence="1">
    <location>
        <position position="74"/>
    </location>
    <ligand>
        <name>substrate</name>
    </ligand>
</feature>
<feature type="binding site" evidence="1">
    <location>
        <position position="88"/>
    </location>
    <ligand>
        <name>substrate</name>
    </ligand>
</feature>
<feature type="binding site" evidence="1">
    <location>
        <begin position="89"/>
        <end position="91"/>
    </location>
    <ligand>
        <name>ATP</name>
        <dbReference type="ChEBI" id="CHEBI:30616"/>
    </ligand>
</feature>
<feature type="binding site" evidence="1">
    <location>
        <position position="99"/>
    </location>
    <ligand>
        <name>ATP</name>
        <dbReference type="ChEBI" id="CHEBI:30616"/>
    </ligand>
</feature>
<feature type="binding site" evidence="1">
    <location>
        <begin position="124"/>
        <end position="130"/>
    </location>
    <ligand>
        <name>ATP</name>
        <dbReference type="ChEBI" id="CHEBI:30616"/>
    </ligand>
</feature>
<feature type="site" description="Transition state stabilizer" evidence="1">
    <location>
        <position position="18"/>
    </location>
</feature>